<evidence type="ECO:0000250" key="1"/>
<evidence type="ECO:0000255" key="2">
    <source>
        <dbReference type="PROSITE-ProRule" id="PRU10035"/>
    </source>
</evidence>
<evidence type="ECO:0000255" key="3">
    <source>
        <dbReference type="PROSITE-ProRule" id="PRU10036"/>
    </source>
</evidence>
<evidence type="ECO:0000269" key="4">
    <source>
    </source>
</evidence>
<evidence type="ECO:0000305" key="5"/>
<feature type="signal peptide" evidence="1">
    <location>
        <begin position="1"/>
        <end position="16"/>
    </location>
</feature>
<feature type="chain" id="PRO_0000418587" description="Acidic phospholipase A2 2">
    <location>
        <begin position="17"/>
        <end position="138"/>
    </location>
</feature>
<feature type="active site" evidence="1">
    <location>
        <position position="63"/>
    </location>
</feature>
<feature type="active site" evidence="1">
    <location>
        <position position="105"/>
    </location>
</feature>
<feature type="binding site" evidence="1">
    <location>
        <position position="43"/>
    </location>
    <ligand>
        <name>Ca(2+)</name>
        <dbReference type="ChEBI" id="CHEBI:29108"/>
    </ligand>
</feature>
<feature type="binding site" evidence="1">
    <location>
        <position position="45"/>
    </location>
    <ligand>
        <name>Ca(2+)</name>
        <dbReference type="ChEBI" id="CHEBI:29108"/>
    </ligand>
</feature>
<feature type="binding site" evidence="1">
    <location>
        <position position="47"/>
    </location>
    <ligand>
        <name>Ca(2+)</name>
        <dbReference type="ChEBI" id="CHEBI:29108"/>
    </ligand>
</feature>
<feature type="binding site" evidence="1">
    <location>
        <position position="64"/>
    </location>
    <ligand>
        <name>Ca(2+)</name>
        <dbReference type="ChEBI" id="CHEBI:29108"/>
    </ligand>
</feature>
<feature type="disulfide bond" evidence="1">
    <location>
        <begin position="42"/>
        <end position="131"/>
    </location>
</feature>
<feature type="disulfide bond" evidence="1">
    <location>
        <begin position="44"/>
        <end position="60"/>
    </location>
</feature>
<feature type="disulfide bond" evidence="1">
    <location>
        <begin position="59"/>
        <end position="111"/>
    </location>
</feature>
<feature type="disulfide bond" evidence="1">
    <location>
        <begin position="65"/>
        <end position="138"/>
    </location>
</feature>
<feature type="disulfide bond" evidence="1">
    <location>
        <begin position="66"/>
        <end position="104"/>
    </location>
</feature>
<feature type="disulfide bond" evidence="1">
    <location>
        <begin position="73"/>
        <end position="97"/>
    </location>
</feature>
<feature type="disulfide bond" evidence="1">
    <location>
        <begin position="91"/>
        <end position="102"/>
    </location>
</feature>
<name>PA2A2_MACLB</name>
<dbReference type="EC" id="3.1.1.4"/>
<dbReference type="EMBL" id="EU421953">
    <property type="protein sequence ID" value="ACB59359.1"/>
    <property type="molecule type" value="mRNA"/>
</dbReference>
<dbReference type="SMR" id="B6CQR5"/>
<dbReference type="GO" id="GO:0005576">
    <property type="term" value="C:extracellular region"/>
    <property type="evidence" value="ECO:0007669"/>
    <property type="project" value="UniProtKB-SubCell"/>
</dbReference>
<dbReference type="GO" id="GO:0005509">
    <property type="term" value="F:calcium ion binding"/>
    <property type="evidence" value="ECO:0007669"/>
    <property type="project" value="InterPro"/>
</dbReference>
<dbReference type="GO" id="GO:0047498">
    <property type="term" value="F:calcium-dependent phospholipase A2 activity"/>
    <property type="evidence" value="ECO:0007669"/>
    <property type="project" value="TreeGrafter"/>
</dbReference>
<dbReference type="GO" id="GO:0005543">
    <property type="term" value="F:phospholipid binding"/>
    <property type="evidence" value="ECO:0007669"/>
    <property type="project" value="TreeGrafter"/>
</dbReference>
<dbReference type="GO" id="GO:0090729">
    <property type="term" value="F:toxin activity"/>
    <property type="evidence" value="ECO:0007669"/>
    <property type="project" value="UniProtKB-KW"/>
</dbReference>
<dbReference type="GO" id="GO:0050482">
    <property type="term" value="P:arachidonate secretion"/>
    <property type="evidence" value="ECO:0007669"/>
    <property type="project" value="InterPro"/>
</dbReference>
<dbReference type="GO" id="GO:0016042">
    <property type="term" value="P:lipid catabolic process"/>
    <property type="evidence" value="ECO:0007669"/>
    <property type="project" value="UniProtKB-KW"/>
</dbReference>
<dbReference type="GO" id="GO:0042130">
    <property type="term" value="P:negative regulation of T cell proliferation"/>
    <property type="evidence" value="ECO:0007669"/>
    <property type="project" value="TreeGrafter"/>
</dbReference>
<dbReference type="GO" id="GO:0006644">
    <property type="term" value="P:phospholipid metabolic process"/>
    <property type="evidence" value="ECO:0007669"/>
    <property type="project" value="InterPro"/>
</dbReference>
<dbReference type="CDD" id="cd00125">
    <property type="entry name" value="PLA2c"/>
    <property type="match status" value="1"/>
</dbReference>
<dbReference type="FunFam" id="1.20.90.10:FF:000001">
    <property type="entry name" value="Basic phospholipase A2 homolog"/>
    <property type="match status" value="1"/>
</dbReference>
<dbReference type="Gene3D" id="1.20.90.10">
    <property type="entry name" value="Phospholipase A2 domain"/>
    <property type="match status" value="1"/>
</dbReference>
<dbReference type="InterPro" id="IPR001211">
    <property type="entry name" value="PLipase_A2"/>
</dbReference>
<dbReference type="InterPro" id="IPR033112">
    <property type="entry name" value="PLipase_A2_Asp_AS"/>
</dbReference>
<dbReference type="InterPro" id="IPR016090">
    <property type="entry name" value="PLipase_A2_dom"/>
</dbReference>
<dbReference type="InterPro" id="IPR036444">
    <property type="entry name" value="PLipase_A2_dom_sf"/>
</dbReference>
<dbReference type="InterPro" id="IPR033113">
    <property type="entry name" value="PLipase_A2_His_AS"/>
</dbReference>
<dbReference type="PANTHER" id="PTHR11716">
    <property type="entry name" value="PHOSPHOLIPASE A2 FAMILY MEMBER"/>
    <property type="match status" value="1"/>
</dbReference>
<dbReference type="PANTHER" id="PTHR11716:SF9">
    <property type="entry name" value="PHOSPHOLIPASE A2, MEMBRANE ASSOCIATED"/>
    <property type="match status" value="1"/>
</dbReference>
<dbReference type="Pfam" id="PF00068">
    <property type="entry name" value="Phospholip_A2_1"/>
    <property type="match status" value="1"/>
</dbReference>
<dbReference type="PRINTS" id="PR00389">
    <property type="entry name" value="PHPHLIPASEA2"/>
</dbReference>
<dbReference type="SMART" id="SM00085">
    <property type="entry name" value="PA2c"/>
    <property type="match status" value="1"/>
</dbReference>
<dbReference type="SUPFAM" id="SSF48619">
    <property type="entry name" value="Phospholipase A2, PLA2"/>
    <property type="match status" value="1"/>
</dbReference>
<dbReference type="PROSITE" id="PS00119">
    <property type="entry name" value="PA2_ASP"/>
    <property type="match status" value="1"/>
</dbReference>
<dbReference type="PROSITE" id="PS00118">
    <property type="entry name" value="PA2_HIS"/>
    <property type="match status" value="1"/>
</dbReference>
<organism>
    <name type="scientific">Macrovipera lebetinus</name>
    <name type="common">Levantine viper</name>
    <name type="synonym">Vipera lebetina</name>
    <dbReference type="NCBI Taxonomy" id="3148341"/>
    <lineage>
        <taxon>Eukaryota</taxon>
        <taxon>Metazoa</taxon>
        <taxon>Chordata</taxon>
        <taxon>Craniata</taxon>
        <taxon>Vertebrata</taxon>
        <taxon>Euteleostomi</taxon>
        <taxon>Lepidosauria</taxon>
        <taxon>Squamata</taxon>
        <taxon>Bifurcata</taxon>
        <taxon>Unidentata</taxon>
        <taxon>Episquamata</taxon>
        <taxon>Toxicofera</taxon>
        <taxon>Serpentes</taxon>
        <taxon>Colubroidea</taxon>
        <taxon>Viperidae</taxon>
        <taxon>Viperinae</taxon>
        <taxon>Macrovipera</taxon>
    </lineage>
</organism>
<accession>B6CQR5</accession>
<reference key="1">
    <citation type="journal article" date="2009" name="Toxicon">
        <title>Purification, characterization, and cDNA cloning of acidic platelet aggregation inhibiting phospholipases A(2) from the snake venom of Vipera lebetina (Levantine viper).</title>
        <authorList>
            <person name="Vija H."/>
            <person name="Samel M."/>
            <person name="Siigur E."/>
            <person name="Aaspollu A."/>
            <person name="Trummal K."/>
            <person name="Tonismagi K."/>
            <person name="Subbi J."/>
            <person name="Siigur J."/>
        </authorList>
    </citation>
    <scope>NUCLEOTIDE SEQUENCE [MRNA]</scope>
    <scope>FUNCTION</scope>
    <scope>BIOPHYSICOCHEMICAL PROPERTIES</scope>
    <scope>SUBUNIT</scope>
    <scope>MASS SPECTROMETRY</scope>
    <scope>IDENTIFICATION BY MASS SPECTROMETRY</scope>
    <source>
        <tissue>Venom</tissue>
        <tissue>Venom gland</tissue>
    </source>
</reference>
<keyword id="KW-0106">Calcium</keyword>
<keyword id="KW-1015">Disulfide bond</keyword>
<keyword id="KW-1199">Hemostasis impairing toxin</keyword>
<keyword id="KW-0378">Hydrolase</keyword>
<keyword id="KW-0442">Lipid degradation</keyword>
<keyword id="KW-0443">Lipid metabolism</keyword>
<keyword id="KW-0479">Metal-binding</keyword>
<keyword id="KW-1201">Platelet aggregation inhibiting toxin</keyword>
<keyword id="KW-0964">Secreted</keyword>
<keyword id="KW-0732">Signal</keyword>
<keyword id="KW-0800">Toxin</keyword>
<sequence>MRTLWIVAVWLTGVEGDLSQFGDMINKKTGTFGLFSYIYYGCYCGWGGKGKPQDATDRCCFVHDCCYGSVNGCDPKLSTYSYSFQNGDIVCGDDDPCLRAVCECDRVAAICSGENMNTYDKKYMLYSLFDCKEESEKC</sequence>
<comment type="function">
    <text evidence="4">Snake venom phospholipase that inhibits ADP- and collagen-induced human platelet aggregation. This inhibition is completely inhibited by abolition of catalytic activity in case of collagen as inducer and partially inhibited in case of ADP as inducer. PLA2 catalyzes the calcium-dependent hydrolysis of the 2-acyl groups in 3-sn-phosphoglycerides.</text>
</comment>
<comment type="catalytic activity">
    <reaction evidence="2 3">
        <text>a 1,2-diacyl-sn-glycero-3-phosphocholine + H2O = a 1-acyl-sn-glycero-3-phosphocholine + a fatty acid + H(+)</text>
        <dbReference type="Rhea" id="RHEA:15801"/>
        <dbReference type="ChEBI" id="CHEBI:15377"/>
        <dbReference type="ChEBI" id="CHEBI:15378"/>
        <dbReference type="ChEBI" id="CHEBI:28868"/>
        <dbReference type="ChEBI" id="CHEBI:57643"/>
        <dbReference type="ChEBI" id="CHEBI:58168"/>
        <dbReference type="EC" id="3.1.1.4"/>
    </reaction>
</comment>
<comment type="cofactor">
    <cofactor evidence="1">
        <name>Ca(2+)</name>
        <dbReference type="ChEBI" id="CHEBI:29108"/>
    </cofactor>
    <text evidence="1">Binds 1 Ca(2+) ion.</text>
</comment>
<comment type="biophysicochemical properties">
    <kinetics>
        <Vmax evidence="4">882.0 umol/min/mg enzyme</Vmax>
    </kinetics>
</comment>
<comment type="subunit">
    <text evidence="4">Monomer.</text>
</comment>
<comment type="subcellular location">
    <subcellularLocation>
        <location>Secreted</location>
    </subcellularLocation>
</comment>
<comment type="tissue specificity">
    <text>Expressed by the venom gland.</text>
</comment>
<comment type="mass spectrometry"/>
<comment type="similarity">
    <text evidence="5">Belongs to the phospholipase A2 family. Group II subfamily. D49 sub-subfamily.</text>
</comment>
<proteinExistence type="evidence at protein level"/>
<protein>
    <recommendedName>
        <fullName>Acidic phospholipase A2 2</fullName>
        <shortName>Vl-PLA2-2</shortName>
        <shortName>svPLA2</shortName>
        <ecNumber>3.1.1.4</ecNumber>
    </recommendedName>
    <alternativeName>
        <fullName>Phosphatidylcholine 2-acylhydrolase</fullName>
    </alternativeName>
</protein>